<organism>
    <name type="scientific">Bacillus cereus (strain AH187)</name>
    <dbReference type="NCBI Taxonomy" id="405534"/>
    <lineage>
        <taxon>Bacteria</taxon>
        <taxon>Bacillati</taxon>
        <taxon>Bacillota</taxon>
        <taxon>Bacilli</taxon>
        <taxon>Bacillales</taxon>
        <taxon>Bacillaceae</taxon>
        <taxon>Bacillus</taxon>
        <taxon>Bacillus cereus group</taxon>
    </lineage>
</organism>
<keyword id="KW-1003">Cell membrane</keyword>
<keyword id="KW-0407">Ion channel</keyword>
<keyword id="KW-0406">Ion transport</keyword>
<keyword id="KW-0472">Membrane</keyword>
<keyword id="KW-0812">Transmembrane</keyword>
<keyword id="KW-1133">Transmembrane helix</keyword>
<keyword id="KW-0813">Transport</keyword>
<protein>
    <recommendedName>
        <fullName evidence="1">Large-conductance mechanosensitive channel</fullName>
    </recommendedName>
</protein>
<evidence type="ECO:0000255" key="1">
    <source>
        <dbReference type="HAMAP-Rule" id="MF_00115"/>
    </source>
</evidence>
<name>MSCL_BACC7</name>
<reference key="1">
    <citation type="submission" date="2008-10" db="EMBL/GenBank/DDBJ databases">
        <title>Genome sequence of Bacillus cereus AH187.</title>
        <authorList>
            <person name="Dodson R.J."/>
            <person name="Durkin A.S."/>
            <person name="Rosovitz M.J."/>
            <person name="Rasko D.A."/>
            <person name="Kolsto A.B."/>
            <person name="Okstad O.A."/>
            <person name="Ravel J."/>
            <person name="Sutton G."/>
        </authorList>
    </citation>
    <scope>NUCLEOTIDE SEQUENCE [LARGE SCALE GENOMIC DNA]</scope>
    <source>
        <strain>AH187</strain>
    </source>
</reference>
<proteinExistence type="inferred from homology"/>
<sequence>MWNEFKKFAFKGNVVDLAVGVVIGAAFGKIVSSLVKDVITPLLGMVLGGVDFTDLKLTFGKSSIMYGNFIQTIFDFLIIAAAIFMFVKVFNKLTSRKEEEEKEEEIPEPTKEEVLLGEIRDLLKQQNSSKDRA</sequence>
<accession>B7HSK8</accession>
<comment type="function">
    <text evidence="1">Channel that opens in response to stretch forces in the membrane lipid bilayer. May participate in the regulation of osmotic pressure changes within the cell.</text>
</comment>
<comment type="subunit">
    <text evidence="1">Homopentamer.</text>
</comment>
<comment type="subcellular location">
    <subcellularLocation>
        <location evidence="1">Cell membrane</location>
        <topology evidence="1">Multi-pass membrane protein</topology>
    </subcellularLocation>
</comment>
<comment type="similarity">
    <text evidence="1">Belongs to the MscL family.</text>
</comment>
<gene>
    <name evidence="1" type="primary">mscL</name>
    <name type="ordered locus">BCAH187_A4806</name>
</gene>
<dbReference type="EMBL" id="CP001177">
    <property type="protein sequence ID" value="ACJ78800.1"/>
    <property type="molecule type" value="Genomic_DNA"/>
</dbReference>
<dbReference type="SMR" id="B7HSK8"/>
<dbReference type="KEGG" id="bcr:BCAH187_A4806"/>
<dbReference type="HOGENOM" id="CLU_095787_0_0_9"/>
<dbReference type="Proteomes" id="UP000002214">
    <property type="component" value="Chromosome"/>
</dbReference>
<dbReference type="GO" id="GO:0005886">
    <property type="term" value="C:plasma membrane"/>
    <property type="evidence" value="ECO:0007669"/>
    <property type="project" value="UniProtKB-SubCell"/>
</dbReference>
<dbReference type="GO" id="GO:0008381">
    <property type="term" value="F:mechanosensitive monoatomic ion channel activity"/>
    <property type="evidence" value="ECO:0007669"/>
    <property type="project" value="UniProtKB-UniRule"/>
</dbReference>
<dbReference type="FunFam" id="1.10.1200.120:FF:000001">
    <property type="entry name" value="Large-conductance mechanosensitive channel"/>
    <property type="match status" value="1"/>
</dbReference>
<dbReference type="Gene3D" id="1.10.1200.120">
    <property type="entry name" value="Large-conductance mechanosensitive channel, MscL, domain 1"/>
    <property type="match status" value="1"/>
</dbReference>
<dbReference type="HAMAP" id="MF_00115">
    <property type="entry name" value="MscL"/>
    <property type="match status" value="1"/>
</dbReference>
<dbReference type="InterPro" id="IPR019823">
    <property type="entry name" value="Mechanosensitive_channel_CS"/>
</dbReference>
<dbReference type="InterPro" id="IPR001185">
    <property type="entry name" value="MS_channel"/>
</dbReference>
<dbReference type="InterPro" id="IPR037673">
    <property type="entry name" value="MSC/AndL"/>
</dbReference>
<dbReference type="InterPro" id="IPR036019">
    <property type="entry name" value="MscL_channel"/>
</dbReference>
<dbReference type="NCBIfam" id="TIGR00220">
    <property type="entry name" value="mscL"/>
    <property type="match status" value="1"/>
</dbReference>
<dbReference type="NCBIfam" id="NF001843">
    <property type="entry name" value="PRK00567.1-4"/>
    <property type="match status" value="1"/>
</dbReference>
<dbReference type="NCBIfam" id="NF010560">
    <property type="entry name" value="PRK13955.1"/>
    <property type="match status" value="1"/>
</dbReference>
<dbReference type="PANTHER" id="PTHR30266:SF2">
    <property type="entry name" value="LARGE-CONDUCTANCE MECHANOSENSITIVE CHANNEL"/>
    <property type="match status" value="1"/>
</dbReference>
<dbReference type="PANTHER" id="PTHR30266">
    <property type="entry name" value="MECHANOSENSITIVE CHANNEL MSCL"/>
    <property type="match status" value="1"/>
</dbReference>
<dbReference type="Pfam" id="PF01741">
    <property type="entry name" value="MscL"/>
    <property type="match status" value="1"/>
</dbReference>
<dbReference type="PRINTS" id="PR01264">
    <property type="entry name" value="MECHCHANNEL"/>
</dbReference>
<dbReference type="SUPFAM" id="SSF81330">
    <property type="entry name" value="Gated mechanosensitive channel"/>
    <property type="match status" value="1"/>
</dbReference>
<dbReference type="PROSITE" id="PS01327">
    <property type="entry name" value="MSCL"/>
    <property type="match status" value="1"/>
</dbReference>
<feature type="chain" id="PRO_1000191352" description="Large-conductance mechanosensitive channel">
    <location>
        <begin position="1"/>
        <end position="133"/>
    </location>
</feature>
<feature type="transmembrane region" description="Helical" evidence="1">
    <location>
        <begin position="14"/>
        <end position="34"/>
    </location>
</feature>
<feature type="transmembrane region" description="Helical" evidence="1">
    <location>
        <begin position="67"/>
        <end position="87"/>
    </location>
</feature>